<protein>
    <recommendedName>
        <fullName evidence="4">Pre-mRNA-processing factor 19</fullName>
        <ecNumber evidence="3">2.3.2.27</ecNumber>
    </recommendedName>
    <alternativeName>
        <fullName>PRP19/PSO4 homolog</fullName>
    </alternativeName>
    <alternativeName>
        <fullName evidence="4">RING-type E3 ubiquitin transferase PRP19</fullName>
    </alternativeName>
</protein>
<reference key="1">
    <citation type="submission" date="2006-09" db="EMBL/GenBank/DDBJ databases">
        <authorList>
            <consortium name="NIH - Mammalian Gene Collection (MGC) project"/>
        </authorList>
    </citation>
    <scope>NUCLEOTIDE SEQUENCE [LARGE SCALE MRNA]</scope>
    <source>
        <strain>Hereford</strain>
        <tissue>Thalamus</tissue>
    </source>
</reference>
<proteinExistence type="evidence at transcript level"/>
<organism>
    <name type="scientific">Bos taurus</name>
    <name type="common">Bovine</name>
    <dbReference type="NCBI Taxonomy" id="9913"/>
    <lineage>
        <taxon>Eukaryota</taxon>
        <taxon>Metazoa</taxon>
        <taxon>Chordata</taxon>
        <taxon>Craniata</taxon>
        <taxon>Vertebrata</taxon>
        <taxon>Euteleostomi</taxon>
        <taxon>Mammalia</taxon>
        <taxon>Eutheria</taxon>
        <taxon>Laurasiatheria</taxon>
        <taxon>Artiodactyla</taxon>
        <taxon>Ruminantia</taxon>
        <taxon>Pecora</taxon>
        <taxon>Bovidae</taxon>
        <taxon>Bovinae</taxon>
        <taxon>Bos</taxon>
    </lineage>
</organism>
<keyword id="KW-0007">Acetylation</keyword>
<keyword id="KW-0963">Cytoplasm</keyword>
<keyword id="KW-0206">Cytoskeleton</keyword>
<keyword id="KW-0227">DNA damage</keyword>
<keyword id="KW-0234">DNA repair</keyword>
<keyword id="KW-0551">Lipid droplet</keyword>
<keyword id="KW-0507">mRNA processing</keyword>
<keyword id="KW-0508">mRNA splicing</keyword>
<keyword id="KW-0539">Nucleus</keyword>
<keyword id="KW-1185">Reference proteome</keyword>
<keyword id="KW-0677">Repeat</keyword>
<keyword id="KW-0747">Spliceosome</keyword>
<keyword id="KW-0808">Transferase</keyword>
<keyword id="KW-0833">Ubl conjugation pathway</keyword>
<keyword id="KW-0853">WD repeat</keyword>
<dbReference type="EC" id="2.3.2.27" evidence="3"/>
<dbReference type="EMBL" id="BC123437">
    <property type="protein sequence ID" value="AAI23438.1"/>
    <property type="molecule type" value="mRNA"/>
</dbReference>
<dbReference type="RefSeq" id="NP_001069108.1">
    <property type="nucleotide sequence ID" value="NM_001075640.1"/>
</dbReference>
<dbReference type="SMR" id="Q08E38"/>
<dbReference type="FunCoup" id="Q08E38">
    <property type="interactions" value="4559"/>
</dbReference>
<dbReference type="STRING" id="9913.ENSBTAP00000019100"/>
<dbReference type="PaxDb" id="9913-ENSBTAP00000019100"/>
<dbReference type="Ensembl" id="ENSBTAT00000081666.2">
    <property type="protein sequence ID" value="ENSBTAP00000069872.2"/>
    <property type="gene ID" value="ENSBTAG00000014366.7"/>
</dbReference>
<dbReference type="GeneID" id="513868"/>
<dbReference type="KEGG" id="bta:513868"/>
<dbReference type="CTD" id="27339"/>
<dbReference type="VEuPathDB" id="HostDB:ENSBTAG00000014366"/>
<dbReference type="VGNC" id="VGNC:33372">
    <property type="gene designation" value="PRPF19"/>
</dbReference>
<dbReference type="eggNOG" id="KOG0289">
    <property type="taxonomic scope" value="Eukaryota"/>
</dbReference>
<dbReference type="GeneTree" id="ENSGT00940000153662"/>
<dbReference type="HOGENOM" id="CLU_023894_1_1_1"/>
<dbReference type="InParanoid" id="Q08E38"/>
<dbReference type="OMA" id="SLDQHWA"/>
<dbReference type="OrthoDB" id="687049at2759"/>
<dbReference type="TreeFam" id="TF105919"/>
<dbReference type="Reactome" id="R-BTA-6781823">
    <property type="pathway name" value="Formation of TC-NER Pre-Incision Complex"/>
</dbReference>
<dbReference type="Reactome" id="R-BTA-6782135">
    <property type="pathway name" value="Dual incision in TC-NER"/>
</dbReference>
<dbReference type="Reactome" id="R-BTA-6782210">
    <property type="pathway name" value="Gap-filling DNA repair synthesis and ligation in TC-NER"/>
</dbReference>
<dbReference type="Reactome" id="R-BTA-72163">
    <property type="pathway name" value="mRNA Splicing - Major Pathway"/>
</dbReference>
<dbReference type="UniPathway" id="UPA00143"/>
<dbReference type="Proteomes" id="UP000009136">
    <property type="component" value="Chromosome 29"/>
</dbReference>
<dbReference type="Bgee" id="ENSBTAG00000014366">
    <property type="expression patterns" value="Expressed in diaphragm and 104 other cell types or tissues"/>
</dbReference>
<dbReference type="GO" id="GO:0005737">
    <property type="term" value="C:cytoplasm"/>
    <property type="evidence" value="ECO:0000250"/>
    <property type="project" value="UniProtKB"/>
</dbReference>
<dbReference type="GO" id="GO:0005662">
    <property type="term" value="C:DNA replication factor A complex"/>
    <property type="evidence" value="ECO:0007669"/>
    <property type="project" value="Ensembl"/>
</dbReference>
<dbReference type="GO" id="GO:0005811">
    <property type="term" value="C:lipid droplet"/>
    <property type="evidence" value="ECO:0007669"/>
    <property type="project" value="UniProtKB-SubCell"/>
</dbReference>
<dbReference type="GO" id="GO:0016607">
    <property type="term" value="C:nuclear speck"/>
    <property type="evidence" value="ECO:0000250"/>
    <property type="project" value="UniProtKB"/>
</dbReference>
<dbReference type="GO" id="GO:0005634">
    <property type="term" value="C:nucleus"/>
    <property type="evidence" value="ECO:0000250"/>
    <property type="project" value="UniProtKB"/>
</dbReference>
<dbReference type="GO" id="GO:0000974">
    <property type="term" value="C:Prp19 complex"/>
    <property type="evidence" value="ECO:0000250"/>
    <property type="project" value="UniProtKB"/>
</dbReference>
<dbReference type="GO" id="GO:0035861">
    <property type="term" value="C:site of double-strand break"/>
    <property type="evidence" value="ECO:0000250"/>
    <property type="project" value="UniProtKB"/>
</dbReference>
<dbReference type="GO" id="GO:0005819">
    <property type="term" value="C:spindle"/>
    <property type="evidence" value="ECO:0007669"/>
    <property type="project" value="UniProtKB-SubCell"/>
</dbReference>
<dbReference type="GO" id="GO:0071006">
    <property type="term" value="C:U2-type catalytic step 1 spliceosome"/>
    <property type="evidence" value="ECO:0000318"/>
    <property type="project" value="GO_Central"/>
</dbReference>
<dbReference type="GO" id="GO:0071007">
    <property type="term" value="C:U2-type catalytic step 2 spliceosome"/>
    <property type="evidence" value="ECO:0007669"/>
    <property type="project" value="Ensembl"/>
</dbReference>
<dbReference type="GO" id="GO:0042802">
    <property type="term" value="F:identical protein binding"/>
    <property type="evidence" value="ECO:0007669"/>
    <property type="project" value="Ensembl"/>
</dbReference>
<dbReference type="GO" id="GO:0061630">
    <property type="term" value="F:ubiquitin protein ligase activity"/>
    <property type="evidence" value="ECO:0000250"/>
    <property type="project" value="UniProtKB"/>
</dbReference>
<dbReference type="GO" id="GO:0004842">
    <property type="term" value="F:ubiquitin-protein transferase activity"/>
    <property type="evidence" value="ECO:0000318"/>
    <property type="project" value="GO_Central"/>
</dbReference>
<dbReference type="GO" id="GO:0034450">
    <property type="term" value="F:ubiquitin-ubiquitin ligase activity"/>
    <property type="evidence" value="ECO:0007669"/>
    <property type="project" value="Ensembl"/>
</dbReference>
<dbReference type="GO" id="GO:0000077">
    <property type="term" value="P:DNA damage checkpoint signaling"/>
    <property type="evidence" value="ECO:0000250"/>
    <property type="project" value="UniProtKB"/>
</dbReference>
<dbReference type="GO" id="GO:0006303">
    <property type="term" value="P:double-strand break repair via nonhomologous end joining"/>
    <property type="evidence" value="ECO:0000250"/>
    <property type="project" value="UniProtKB"/>
</dbReference>
<dbReference type="GO" id="GO:0001833">
    <property type="term" value="P:inner cell mass cell proliferation"/>
    <property type="evidence" value="ECO:0007669"/>
    <property type="project" value="Ensembl"/>
</dbReference>
<dbReference type="GO" id="GO:0008610">
    <property type="term" value="P:lipid biosynthetic process"/>
    <property type="evidence" value="ECO:0007669"/>
    <property type="project" value="Ensembl"/>
</dbReference>
<dbReference type="GO" id="GO:0000398">
    <property type="term" value="P:mRNA splicing, via spliceosome"/>
    <property type="evidence" value="ECO:0000250"/>
    <property type="project" value="UniProtKB"/>
</dbReference>
<dbReference type="GO" id="GO:0048026">
    <property type="term" value="P:positive regulation of mRNA splicing, via spliceosome"/>
    <property type="evidence" value="ECO:0007669"/>
    <property type="project" value="Ensembl"/>
</dbReference>
<dbReference type="GO" id="GO:0010498">
    <property type="term" value="P:proteasomal protein catabolic process"/>
    <property type="evidence" value="ECO:0000250"/>
    <property type="project" value="UniProtKB"/>
</dbReference>
<dbReference type="GO" id="GO:0070534">
    <property type="term" value="P:protein K63-linked ubiquitination"/>
    <property type="evidence" value="ECO:0000250"/>
    <property type="project" value="UniProtKB"/>
</dbReference>
<dbReference type="GO" id="GO:0008104">
    <property type="term" value="P:protein localization"/>
    <property type="evidence" value="ECO:0000250"/>
    <property type="project" value="UniProtKB"/>
</dbReference>
<dbReference type="GO" id="GO:0000245">
    <property type="term" value="P:spliceosomal complex assembly"/>
    <property type="evidence" value="ECO:0007669"/>
    <property type="project" value="Ensembl"/>
</dbReference>
<dbReference type="GO" id="GO:0000244">
    <property type="term" value="P:spliceosomal tri-snRNP complex assembly"/>
    <property type="evidence" value="ECO:0000250"/>
    <property type="project" value="UniProtKB"/>
</dbReference>
<dbReference type="CDD" id="cd16656">
    <property type="entry name" value="RING-Ubox_PRP19"/>
    <property type="match status" value="1"/>
</dbReference>
<dbReference type="CDD" id="cd00200">
    <property type="entry name" value="WD40"/>
    <property type="match status" value="1"/>
</dbReference>
<dbReference type="FunFam" id="2.130.10.10:FF:000043">
    <property type="entry name" value="pre-mRNA-processing factor 19"/>
    <property type="match status" value="1"/>
</dbReference>
<dbReference type="FunFam" id="3.30.40.10:FF:000027">
    <property type="entry name" value="Pre-mRNA-processing factor 19, putative"/>
    <property type="match status" value="1"/>
</dbReference>
<dbReference type="Gene3D" id="2.130.10.10">
    <property type="entry name" value="YVTN repeat-like/Quinoprotein amine dehydrogenase"/>
    <property type="match status" value="1"/>
</dbReference>
<dbReference type="Gene3D" id="3.30.40.10">
    <property type="entry name" value="Zinc/RING finger domain, C3HC4 (zinc finger)"/>
    <property type="match status" value="1"/>
</dbReference>
<dbReference type="InterPro" id="IPR020472">
    <property type="entry name" value="G-protein_beta_WD-40_rep"/>
</dbReference>
<dbReference type="InterPro" id="IPR013915">
    <property type="entry name" value="Pre-mRNA_splic_Prp19_cc"/>
</dbReference>
<dbReference type="InterPro" id="IPR038959">
    <property type="entry name" value="Prp19"/>
</dbReference>
<dbReference type="InterPro" id="IPR055340">
    <property type="entry name" value="RING-Ubox_PRP19"/>
</dbReference>
<dbReference type="InterPro" id="IPR003613">
    <property type="entry name" value="Ubox_domain"/>
</dbReference>
<dbReference type="InterPro" id="IPR015943">
    <property type="entry name" value="WD40/YVTN_repeat-like_dom_sf"/>
</dbReference>
<dbReference type="InterPro" id="IPR019775">
    <property type="entry name" value="WD40_repeat_CS"/>
</dbReference>
<dbReference type="InterPro" id="IPR036322">
    <property type="entry name" value="WD40_repeat_dom_sf"/>
</dbReference>
<dbReference type="InterPro" id="IPR001680">
    <property type="entry name" value="WD40_rpt"/>
</dbReference>
<dbReference type="InterPro" id="IPR013083">
    <property type="entry name" value="Znf_RING/FYVE/PHD"/>
</dbReference>
<dbReference type="PANTHER" id="PTHR43995">
    <property type="entry name" value="PRE-MRNA-PROCESSING FACTOR 19"/>
    <property type="match status" value="1"/>
</dbReference>
<dbReference type="PANTHER" id="PTHR43995:SF1">
    <property type="entry name" value="PRE-MRNA-PROCESSING FACTOR 19"/>
    <property type="match status" value="1"/>
</dbReference>
<dbReference type="Pfam" id="PF08606">
    <property type="entry name" value="Prp19"/>
    <property type="match status" value="1"/>
</dbReference>
<dbReference type="Pfam" id="PF04564">
    <property type="entry name" value="U-box"/>
    <property type="match status" value="1"/>
</dbReference>
<dbReference type="Pfam" id="PF24814">
    <property type="entry name" value="WD40_Prp19"/>
    <property type="match status" value="1"/>
</dbReference>
<dbReference type="PRINTS" id="PR00320">
    <property type="entry name" value="GPROTEINBRPT"/>
</dbReference>
<dbReference type="SMART" id="SM00504">
    <property type="entry name" value="Ubox"/>
    <property type="match status" value="1"/>
</dbReference>
<dbReference type="SMART" id="SM00320">
    <property type="entry name" value="WD40"/>
    <property type="match status" value="7"/>
</dbReference>
<dbReference type="SUPFAM" id="SSF57850">
    <property type="entry name" value="RING/U-box"/>
    <property type="match status" value="1"/>
</dbReference>
<dbReference type="SUPFAM" id="SSF50978">
    <property type="entry name" value="WD40 repeat-like"/>
    <property type="match status" value="1"/>
</dbReference>
<dbReference type="PROSITE" id="PS51698">
    <property type="entry name" value="U_BOX"/>
    <property type="match status" value="1"/>
</dbReference>
<dbReference type="PROSITE" id="PS00678">
    <property type="entry name" value="WD_REPEATS_1"/>
    <property type="match status" value="1"/>
</dbReference>
<dbReference type="PROSITE" id="PS50082">
    <property type="entry name" value="WD_REPEATS_2"/>
    <property type="match status" value="4"/>
</dbReference>
<dbReference type="PROSITE" id="PS50294">
    <property type="entry name" value="WD_REPEATS_REGION"/>
    <property type="match status" value="1"/>
</dbReference>
<name>PRP19_BOVIN</name>
<accession>Q08E38</accession>
<feature type="initiator methionine" description="Removed" evidence="3">
    <location>
        <position position="1"/>
    </location>
</feature>
<feature type="chain" id="PRO_0000329313" description="Pre-mRNA-processing factor 19">
    <location>
        <begin position="2"/>
        <end position="504"/>
    </location>
</feature>
<feature type="domain" description="U-box">
    <location>
        <begin position="2"/>
        <end position="73"/>
    </location>
</feature>
<feature type="repeat" description="WD 1">
    <location>
        <begin position="219"/>
        <end position="259"/>
    </location>
</feature>
<feature type="repeat" description="WD 2">
    <location>
        <begin position="262"/>
        <end position="301"/>
    </location>
</feature>
<feature type="repeat" description="WD 3">
    <location>
        <begin position="304"/>
        <end position="345"/>
    </location>
</feature>
<feature type="repeat" description="WD 4">
    <location>
        <begin position="348"/>
        <end position="387"/>
    </location>
</feature>
<feature type="repeat" description="WD 5">
    <location>
        <begin position="390"/>
        <end position="429"/>
    </location>
</feature>
<feature type="repeat" description="WD 6">
    <location>
        <begin position="433"/>
        <end position="472"/>
    </location>
</feature>
<feature type="repeat" description="WD 7">
    <location>
        <begin position="473"/>
        <end position="503"/>
    </location>
</feature>
<feature type="region of interest" description="May mediate interaction with PSMC5" evidence="1">
    <location>
        <begin position="68"/>
        <end position="223"/>
    </location>
</feature>
<feature type="modified residue" description="N-acetylserine" evidence="3">
    <location>
        <position position="2"/>
    </location>
</feature>
<feature type="modified residue" description="N6-acetyllysine" evidence="3">
    <location>
        <position position="122"/>
    </location>
</feature>
<feature type="modified residue" description="N6-acetyllysine" evidence="1">
    <location>
        <position position="179"/>
    </location>
</feature>
<feature type="modified residue" description="N6-acetyllysine" evidence="1">
    <location>
        <position position="244"/>
    </location>
</feature>
<feature type="modified residue" description="N6-acetyllysine" evidence="3">
    <location>
        <position position="261"/>
    </location>
</feature>
<evidence type="ECO:0000250" key="1">
    <source>
        <dbReference type="UniProtKB" id="Q99KP6"/>
    </source>
</evidence>
<evidence type="ECO:0000250" key="2">
    <source>
        <dbReference type="UniProtKB" id="Q9JMJ4"/>
    </source>
</evidence>
<evidence type="ECO:0000250" key="3">
    <source>
        <dbReference type="UniProtKB" id="Q9UMS4"/>
    </source>
</evidence>
<evidence type="ECO:0000305" key="4"/>
<gene>
    <name type="primary">PRPF19</name>
</gene>
<comment type="function">
    <text evidence="1 2 3">Ubiquitin-protein ligase which is a core component of several complexes mainly involved pre-mRNA splicing and DNA repair. Required for pre-mRNA splicing as component of the spliceosome (By similarity). Core component of the PRP19C/Prp19 complex/NTC/Nineteen complex which is part of the spliceosome and participates in its assembly, its remodeling and is required for its activity. During assembly of the spliceosome, mediates 'Lys-63'-linked polyubiquitination of the U4 spliceosomal protein PRPF3. Ubiquitination of PRPF3 allows its recognition by the U5 component PRPF8 and stabilizes the U4/U5/U6 tri-snRNP spliceosomal complex. Recruited to RNA polymerase II C-terminal domain (CTD) and the pre-mRNA, it may also couple the transcriptional and spliceosomal machineries. The XAB2 complex, which contains PRPF19, is also involved in pre-mRNA splicing, transcription and transcription-coupled repair. Beside its role in pre-mRNA splicing PRPF19, as part of the PRP19-CDC5L complex, plays a role in the DNA damage response/DDR. It is recruited to the sites of DNA damage by the RPA complex where PRPF19 directly ubiquitinates RPA1 and RPA2. 'Lys-63'-linked polyubiquitination of the RPA complex allows the recruitment of the ATR-ATRIP complex and the activation of ATR, a master regulator of the DNA damage response. May also play a role in DNA double-strand break (DSB) repair by recruiting the repair factor SETMAR to altered DNA. As part of the PSO4 complex may also be involved in the DNA interstrand cross-links/ICLs repair process. In addition, may also mediate 'Lys-48'-linked polyubiquitination of substrates and play a role in proteasomal degradation (By similarity). May play a role in the biogenesis of lipid droplets (By similarity). May play a role in neural differentiation possibly through its function as part of the spliceosome (By similarity).</text>
</comment>
<comment type="catalytic activity">
    <reaction evidence="3">
        <text>S-ubiquitinyl-[E2 ubiquitin-conjugating enzyme]-L-cysteine + [acceptor protein]-L-lysine = [E2 ubiquitin-conjugating enzyme]-L-cysteine + N(6)-ubiquitinyl-[acceptor protein]-L-lysine.</text>
        <dbReference type="EC" id="2.3.2.27"/>
    </reaction>
</comment>
<comment type="pathway">
    <text evidence="3">Protein modification; protein ubiquitination.</text>
</comment>
<comment type="subunit">
    <text evidence="1 2 3">Homotetramer. Component of activated, catalytic and post-catalytic spliceosomes (By similarity). Component of the Prp19 complex/PRP19C/Nineteen complex/NTC and related complexes described as PRP19-CDC5L splicing complex and PSO4 complex. A homotetramer of PRPF19, CDC5L, PLRG1 and BCAS2 constitute the core of those complexes. The interaction with CDC5L, PLRG1 and BCAS2 is direct within this core complex. At least three less stably associated proteins CTNNBL1, CWC15 and HSPA8 are found in the Prp19 complex. The Prp19 complex associates with the spliceosome during its assembly and remodeling recruiting additional proteins. Component of the XAB2 complex, a multimeric protein complex composed of XAB2, PRPF19, AQR, ZNF830, ISY1, and PPIE. Interacts with CWC22 and EIF4A3 in an RNA-independent manner. Interacts with RPA1 and RPA2; the PRP19-CDC5L complex is recruited to the sites of DNA repair where it interacts with the replication protein A complex (RPA). Interacts with SETMAR; required for SETMAR recruitment to site of DNA damage. Interacts with U2AF2; the interaction is direct and recruits the Prp19 complex to RNA polymerase II C-terminal domain (CTD) and the pre-mRNA. Interacts with PRPF3. Interacts with APEX1, DNTT and PSMB4. Interacts with PSMC5 (By similarity). Interacts with KNSTRN (By similarity). Interacts (via N-terminus) with CDC5L (By similarity). Interacts with KHDC4 (By similarity). Interacts with USB1 (By similarity). Interacts with DDX41 (By similarity).</text>
</comment>
<comment type="subcellular location">
    <subcellularLocation>
        <location evidence="3">Nucleus</location>
    </subcellularLocation>
    <subcellularLocation>
        <location evidence="3">Nucleus</location>
        <location evidence="3">Nucleoplasm</location>
    </subcellularLocation>
    <subcellularLocation>
        <location evidence="3">Cytoplasm</location>
        <location evidence="3">Cytoskeleton</location>
        <location evidence="3">Spindle</location>
    </subcellularLocation>
    <subcellularLocation>
        <location evidence="3">Cytoplasm</location>
    </subcellularLocation>
    <subcellularLocation>
        <location evidence="3">Lipid droplet</location>
    </subcellularLocation>
    <text evidence="3">Nucleoplasmic in interphase cells. Irregularly distributed in anaphase cells. In prophase cells, uniformly distributed, but not associated with condensing chromosomes. Found in extrachromosomal regions in metaphase cells. Mainly localized to the mitotic spindle apparatus when chromosomes segregate during anaphase. When nuclei reform during late telophase, uniformly distributed in daughter cells and displays no preferred association with decondensing chromatin. Recruited on damaged DNA at sites of double-strand break.</text>
</comment>
<comment type="domain">
    <text evidence="3">The 7 WD repeats are necessary and sufficient to support interaction with the RPA complex.</text>
</comment>
<comment type="similarity">
    <text evidence="4">Belongs to the WD repeat PRP19 family.</text>
</comment>
<sequence>MSLICSISNEVPEHPCVSPVSNHVYERRLIEKYIAENGTDPINNQPLSEEQLIDIKVAHPIRPKPPSATSIPAILKALQDEWDAVMLHSFTLRQQLQTTRQELSHALYQHDAACRVIARLTKEVTAAREALATLKPQAGLIVPQAVPSSQPSVVGAGEPMDLGELVGMTPEIIQKLQDKATVLTTERKKRGKTVPEELVKPEELSKYRQVASHVGLHSASIPGILALDLCPSDTNKILTGGADKNVVVFDKSSEQILATLKGHTKKVTSVVFHPSQELVFSASPDATIRIWSVPNASCVQVVRAHESAVTGLSLHATGDYLLSSSDDQYWAFSDIQTGRVLTKVTDETSGCSLTCAQFHPDGLIFGTGTMDSQIKIWDLKERTNVANFPGHSGPITSIAFSENGYYLATAADDSSVKLWDLRKLKNFKTLQLDNNFEVKSLIFDQSGTYLALGGTDVQIYICKQWTEILHFTEHSGLTTGVAFGHHAKFIASTGMDRSLKFYSL</sequence>